<reference key="1">
    <citation type="journal article" date="1993" name="Mol. Microbiol.">
        <title>The nik operon of Escherichia coli encodes a periplasmic binding-protein-dependent transport system for nickel.</title>
        <authorList>
            <person name="Navarro C."/>
            <person name="Wu L.-F."/>
            <person name="Mandrand-Berthelot M.-A."/>
        </authorList>
    </citation>
    <scope>NUCLEOTIDE SEQUENCE [GENOMIC DNA]</scope>
    <source>
        <strain>K12</strain>
    </source>
</reference>
<reference key="2">
    <citation type="journal article" date="1994" name="Nucleic Acids Res.">
        <title>Analysis of the Escherichia coli genome. V. DNA sequence of the region from 76.0 to 81.5 minutes.</title>
        <authorList>
            <person name="Sofia H.J."/>
            <person name="Burland V."/>
            <person name="Daniels D.L."/>
            <person name="Plunkett G. III"/>
            <person name="Blattner F.R."/>
        </authorList>
    </citation>
    <scope>NUCLEOTIDE SEQUENCE [LARGE SCALE GENOMIC DNA]</scope>
    <source>
        <strain>K12 / MG1655 / ATCC 47076</strain>
    </source>
</reference>
<reference key="3">
    <citation type="journal article" date="1997" name="Science">
        <title>The complete genome sequence of Escherichia coli K-12.</title>
        <authorList>
            <person name="Blattner F.R."/>
            <person name="Plunkett G. III"/>
            <person name="Bloch C.A."/>
            <person name="Perna N.T."/>
            <person name="Burland V."/>
            <person name="Riley M."/>
            <person name="Collado-Vides J."/>
            <person name="Glasner J.D."/>
            <person name="Rode C.K."/>
            <person name="Mayhew G.F."/>
            <person name="Gregor J."/>
            <person name="Davis N.W."/>
            <person name="Kirkpatrick H.A."/>
            <person name="Goeden M.A."/>
            <person name="Rose D.J."/>
            <person name="Mau B."/>
            <person name="Shao Y."/>
        </authorList>
    </citation>
    <scope>NUCLEOTIDE SEQUENCE [LARGE SCALE GENOMIC DNA]</scope>
    <source>
        <strain>K12 / MG1655 / ATCC 47076</strain>
    </source>
</reference>
<reference key="4">
    <citation type="journal article" date="2006" name="Mol. Syst. Biol.">
        <title>Highly accurate genome sequences of Escherichia coli K-12 strains MG1655 and W3110.</title>
        <authorList>
            <person name="Hayashi K."/>
            <person name="Morooka N."/>
            <person name="Yamamoto Y."/>
            <person name="Fujita K."/>
            <person name="Isono K."/>
            <person name="Choi S."/>
            <person name="Ohtsubo E."/>
            <person name="Baba T."/>
            <person name="Wanner B.L."/>
            <person name="Mori H."/>
            <person name="Horiuchi T."/>
        </authorList>
    </citation>
    <scope>NUCLEOTIDE SEQUENCE [LARGE SCALE GENOMIC DNA]</scope>
    <source>
        <strain>K12 / W3110 / ATCC 27325 / DSM 5911</strain>
    </source>
</reference>
<organism>
    <name type="scientific">Escherichia coli (strain K12)</name>
    <dbReference type="NCBI Taxonomy" id="83333"/>
    <lineage>
        <taxon>Bacteria</taxon>
        <taxon>Pseudomonadati</taxon>
        <taxon>Pseudomonadota</taxon>
        <taxon>Gammaproteobacteria</taxon>
        <taxon>Enterobacterales</taxon>
        <taxon>Enterobacteriaceae</taxon>
        <taxon>Escherichia</taxon>
    </lineage>
</organism>
<comment type="function">
    <text evidence="1">Part of the ABC transporter complex NikABCDE involved in nickel import. Responsible for energy coupling to the transport system.</text>
</comment>
<comment type="catalytic activity">
    <reaction evidence="1">
        <text>Ni(2+)(out) + ATP + H2O = Ni(2+)(in) + ADP + phosphate + H(+)</text>
        <dbReference type="Rhea" id="RHEA:15557"/>
        <dbReference type="ChEBI" id="CHEBI:15377"/>
        <dbReference type="ChEBI" id="CHEBI:15378"/>
        <dbReference type="ChEBI" id="CHEBI:30616"/>
        <dbReference type="ChEBI" id="CHEBI:43474"/>
        <dbReference type="ChEBI" id="CHEBI:49786"/>
        <dbReference type="ChEBI" id="CHEBI:456216"/>
        <dbReference type="EC" id="7.2.2.11"/>
    </reaction>
</comment>
<comment type="subunit">
    <text evidence="1">The complex is composed of two ATP-binding proteins (NikD and NikE), two transmembrane proteins (NikB and NikC) and a solute-binding protein (NikA).</text>
</comment>
<comment type="subcellular location">
    <subcellularLocation>
        <location evidence="1">Cell inner membrane</location>
        <topology evidence="1">Peripheral membrane protein</topology>
    </subcellularLocation>
</comment>
<comment type="similarity">
    <text evidence="1">Belongs to the ABC transporter superfamily. Nickel importer (TC 3.A.1.5.3) family.</text>
</comment>
<keyword id="KW-0067">ATP-binding</keyword>
<keyword id="KW-0997">Cell inner membrane</keyword>
<keyword id="KW-1003">Cell membrane</keyword>
<keyword id="KW-0406">Ion transport</keyword>
<keyword id="KW-0472">Membrane</keyword>
<keyword id="KW-0533">Nickel</keyword>
<keyword id="KW-0921">Nickel transport</keyword>
<keyword id="KW-0547">Nucleotide-binding</keyword>
<keyword id="KW-1185">Reference proteome</keyword>
<keyword id="KW-1278">Translocase</keyword>
<keyword id="KW-0813">Transport</keyword>
<protein>
    <recommendedName>
        <fullName evidence="1">Nickel import ATP-binding protein NikE</fullName>
        <ecNumber evidence="1">7.2.2.11</ecNumber>
    </recommendedName>
</protein>
<accession>P33594</accession>
<accession>Q2M7E3</accession>
<feature type="chain" id="PRO_0000092627" description="Nickel import ATP-binding protein NikE">
    <location>
        <begin position="1"/>
        <end position="268"/>
    </location>
</feature>
<feature type="domain" description="ABC transporter" evidence="1">
    <location>
        <begin position="4"/>
        <end position="252"/>
    </location>
</feature>
<feature type="binding site" evidence="1">
    <location>
        <begin position="45"/>
        <end position="52"/>
    </location>
    <ligand>
        <name>ATP</name>
        <dbReference type="ChEBI" id="CHEBI:30616"/>
    </ligand>
</feature>
<feature type="sequence conflict" description="In Ref. 1; CAA51663." evidence="2" ref="1">
    <original>RS</original>
    <variation>GT</variation>
    <location>
        <begin position="46"/>
        <end position="47"/>
    </location>
</feature>
<feature type="sequence conflict" description="In Ref. 1; CAA51663." evidence="2" ref="1">
    <original>R</original>
    <variation>A</variation>
    <location>
        <position position="84"/>
    </location>
</feature>
<feature type="sequence conflict" description="In Ref. 1; CAA51663." evidence="2" ref="1">
    <original>SE</original>
    <variation>RQ</variation>
    <location>
        <begin position="132"/>
        <end position="133"/>
    </location>
</feature>
<dbReference type="EC" id="7.2.2.11" evidence="1"/>
<dbReference type="EMBL" id="X73143">
    <property type="protein sequence ID" value="CAA51663.1"/>
    <property type="molecule type" value="Genomic_DNA"/>
</dbReference>
<dbReference type="EMBL" id="U00039">
    <property type="protein sequence ID" value="AAB18455.1"/>
    <property type="molecule type" value="Genomic_DNA"/>
</dbReference>
<dbReference type="EMBL" id="U00096">
    <property type="protein sequence ID" value="AAC76505.1"/>
    <property type="molecule type" value="Genomic_DNA"/>
</dbReference>
<dbReference type="EMBL" id="AP009048">
    <property type="protein sequence ID" value="BAE77813.1"/>
    <property type="molecule type" value="Genomic_DNA"/>
</dbReference>
<dbReference type="PIR" id="C65145">
    <property type="entry name" value="C65145"/>
</dbReference>
<dbReference type="RefSeq" id="NP_417937.1">
    <property type="nucleotide sequence ID" value="NC_000913.3"/>
</dbReference>
<dbReference type="RefSeq" id="WP_000173631.1">
    <property type="nucleotide sequence ID" value="NZ_SSZK01000008.1"/>
</dbReference>
<dbReference type="SMR" id="P33594"/>
<dbReference type="BioGRID" id="4262508">
    <property type="interactions" value="20"/>
</dbReference>
<dbReference type="BioGRID" id="852296">
    <property type="interactions" value="2"/>
</dbReference>
<dbReference type="ComplexPortal" id="CPX-4348">
    <property type="entry name" value="Nickel ABC transporter complex"/>
</dbReference>
<dbReference type="DIP" id="DIP-10344N"/>
<dbReference type="FunCoup" id="P33594">
    <property type="interactions" value="254"/>
</dbReference>
<dbReference type="IntAct" id="P33594">
    <property type="interactions" value="11"/>
</dbReference>
<dbReference type="STRING" id="511145.b3480"/>
<dbReference type="TCDB" id="3.A.1.5.3">
    <property type="family name" value="the atp-binding cassette (abc) superfamily"/>
</dbReference>
<dbReference type="PaxDb" id="511145-b3480"/>
<dbReference type="EnsemblBacteria" id="AAC76505">
    <property type="protein sequence ID" value="AAC76505"/>
    <property type="gene ID" value="b3480"/>
</dbReference>
<dbReference type="GeneID" id="947987"/>
<dbReference type="KEGG" id="ecj:JW3445"/>
<dbReference type="KEGG" id="eco:b3480"/>
<dbReference type="KEGG" id="ecoc:C3026_18845"/>
<dbReference type="PATRIC" id="fig|1411691.4.peg.3245"/>
<dbReference type="EchoBASE" id="EB2004"/>
<dbReference type="eggNOG" id="COG1124">
    <property type="taxonomic scope" value="Bacteria"/>
</dbReference>
<dbReference type="HOGENOM" id="CLU_000604_1_23_6"/>
<dbReference type="InParanoid" id="P33594"/>
<dbReference type="OMA" id="CHFQMEK"/>
<dbReference type="OrthoDB" id="9784450at2"/>
<dbReference type="PhylomeDB" id="P33594"/>
<dbReference type="BioCyc" id="EcoCyc:NIKE-MONOMER"/>
<dbReference type="BioCyc" id="MetaCyc:NIKE-MONOMER"/>
<dbReference type="PRO" id="PR:P33594"/>
<dbReference type="Proteomes" id="UP000000625">
    <property type="component" value="Chromosome"/>
</dbReference>
<dbReference type="GO" id="GO:0055052">
    <property type="term" value="C:ATP-binding cassette (ABC) transporter complex, substrate-binding subunit-containing"/>
    <property type="evidence" value="ECO:0000303"/>
    <property type="project" value="ComplexPortal"/>
</dbReference>
<dbReference type="GO" id="GO:0016020">
    <property type="term" value="C:membrane"/>
    <property type="evidence" value="ECO:0000303"/>
    <property type="project" value="ComplexPortal"/>
</dbReference>
<dbReference type="GO" id="GO:0015413">
    <property type="term" value="F:ABC-type nickel transporter activity"/>
    <property type="evidence" value="ECO:0007669"/>
    <property type="project" value="UniProtKB-EC"/>
</dbReference>
<dbReference type="GO" id="GO:0005524">
    <property type="term" value="F:ATP binding"/>
    <property type="evidence" value="ECO:0000255"/>
    <property type="project" value="EcoCyc"/>
</dbReference>
<dbReference type="GO" id="GO:0016887">
    <property type="term" value="F:ATP hydrolysis activity"/>
    <property type="evidence" value="ECO:0007669"/>
    <property type="project" value="InterPro"/>
</dbReference>
<dbReference type="GO" id="GO:0016151">
    <property type="term" value="F:nickel cation binding"/>
    <property type="evidence" value="ECO:0007669"/>
    <property type="project" value="InterPro"/>
</dbReference>
<dbReference type="GO" id="GO:0006974">
    <property type="term" value="P:DNA damage response"/>
    <property type="evidence" value="ECO:0000270"/>
    <property type="project" value="EcoliWiki"/>
</dbReference>
<dbReference type="GO" id="GO:0098716">
    <property type="term" value="P:nickel cation import across plasma membrane"/>
    <property type="evidence" value="ECO:0000315"/>
    <property type="project" value="EcoCyc"/>
</dbReference>
<dbReference type="CDD" id="cd03257">
    <property type="entry name" value="ABC_NikE_OppD_transporters"/>
    <property type="match status" value="1"/>
</dbReference>
<dbReference type="FunFam" id="3.40.50.300:FF:001020">
    <property type="entry name" value="Nickel import ATP-binding protein NikE"/>
    <property type="match status" value="1"/>
</dbReference>
<dbReference type="Gene3D" id="3.40.50.300">
    <property type="entry name" value="P-loop containing nucleotide triphosphate hydrolases"/>
    <property type="match status" value="1"/>
</dbReference>
<dbReference type="InterPro" id="IPR003593">
    <property type="entry name" value="AAA+_ATPase"/>
</dbReference>
<dbReference type="InterPro" id="IPR050319">
    <property type="entry name" value="ABC_transp_ATP-bind"/>
</dbReference>
<dbReference type="InterPro" id="IPR003439">
    <property type="entry name" value="ABC_transporter-like_ATP-bd"/>
</dbReference>
<dbReference type="InterPro" id="IPR017871">
    <property type="entry name" value="ABC_transporter-like_CS"/>
</dbReference>
<dbReference type="InterPro" id="IPR014137">
    <property type="entry name" value="Nickel_NikE"/>
</dbReference>
<dbReference type="InterPro" id="IPR027417">
    <property type="entry name" value="P-loop_NTPase"/>
</dbReference>
<dbReference type="NCBIfam" id="TIGR02769">
    <property type="entry name" value="nickel_nikE"/>
    <property type="match status" value="1"/>
</dbReference>
<dbReference type="NCBIfam" id="NF007739">
    <property type="entry name" value="PRK10419.1"/>
    <property type="match status" value="1"/>
</dbReference>
<dbReference type="PANTHER" id="PTHR43776:SF7">
    <property type="entry name" value="D,D-DIPEPTIDE TRANSPORT ATP-BINDING PROTEIN DDPF-RELATED"/>
    <property type="match status" value="1"/>
</dbReference>
<dbReference type="PANTHER" id="PTHR43776">
    <property type="entry name" value="TRANSPORT ATP-BINDING PROTEIN"/>
    <property type="match status" value="1"/>
</dbReference>
<dbReference type="Pfam" id="PF00005">
    <property type="entry name" value="ABC_tran"/>
    <property type="match status" value="1"/>
</dbReference>
<dbReference type="SMART" id="SM00382">
    <property type="entry name" value="AAA"/>
    <property type="match status" value="1"/>
</dbReference>
<dbReference type="SUPFAM" id="SSF52540">
    <property type="entry name" value="P-loop containing nucleoside triphosphate hydrolases"/>
    <property type="match status" value="1"/>
</dbReference>
<dbReference type="PROSITE" id="PS00211">
    <property type="entry name" value="ABC_TRANSPORTER_1"/>
    <property type="match status" value="1"/>
</dbReference>
<dbReference type="PROSITE" id="PS50893">
    <property type="entry name" value="ABC_TRANSPORTER_2"/>
    <property type="match status" value="1"/>
</dbReference>
<dbReference type="PROSITE" id="PS51248">
    <property type="entry name" value="NIKE"/>
    <property type="match status" value="1"/>
</dbReference>
<proteinExistence type="inferred from homology"/>
<name>NIKE_ECOLI</name>
<sequence length="268" mass="29722">MTLLNISGLSHHYAHGGFNGKHQHQAVLNNVSLTLKSGETVALLGRSGCGKSTLARLLVGLESPAQGNISWRGEPLAKLNRAQRKAFRRDIQMVFQDSISAVNPRKTVREILREPMRHLLSLKKSEQLARASEMLKAVDLDDSVLDKRPPQLSGGQLQRVCLARALAVEPKLLILDEAVSNLDLVLQAGVIRLLKKLQQQFGTACLFITHDLRLVERFCQRVMVMDNGQIVETQVVGEKLTFSSDAGRVLQNAVLPAFPVRRRTTEKV</sequence>
<gene>
    <name evidence="1" type="primary">nikE</name>
    <name type="ordered locus">b3480</name>
    <name type="ordered locus">JW3445</name>
</gene>
<evidence type="ECO:0000255" key="1">
    <source>
        <dbReference type="HAMAP-Rule" id="MF_01712"/>
    </source>
</evidence>
<evidence type="ECO:0000305" key="2"/>